<sequence>MHSEAEESKEVATDVFNSKNLAVQAQKKILGKMVSKSIATTLIDDTSSEVLDELYRVTREYTQNKKEAEKIIKNLIKTVIKLAILYRNNQFNQDELALMEKFKKKVHQLAMTVVSFHQVDYTFDRNVLSRLLNECREMLHQIIQRHLTAKSHGRVNNVFDHFSDCEFLAALYNPFGNFKPHLQKLCDGINKMLDEENI</sequence>
<comment type="function">
    <text evidence="3 4 5">Acts as a negative mediator of apoptosis and may play a role in tumor progression. Suppresses the TNF-mediated apoptosis by inhibiting caspase-8 activity but not the processing of procaspase-8, subsequently resulting in inhibition of BID cleavage and caspase-3 activation.</text>
</comment>
<comment type="interaction">
    <interactant intactId="EBI-1049336">
        <id>O95379</id>
    </interactant>
    <interactant intactId="EBI-11954292">
        <id>Q86V38</id>
        <label>ATN1</label>
    </interactant>
    <organismsDiffer>false</organismsDiffer>
    <experiments>3</experiments>
</comment>
<comment type="interaction">
    <interactant intactId="EBI-1049336">
        <id>O95379</id>
    </interactant>
    <interactant intactId="EBI-769261">
        <id>Q96JC9</id>
        <label>EAF1</label>
    </interactant>
    <organismsDiffer>false</organismsDiffer>
    <experiments>3</experiments>
</comment>
<comment type="interaction">
    <interactant intactId="EBI-1049336">
        <id>O95379</id>
    </interactant>
    <interactant intactId="EBI-748732">
        <id>Q56P03</id>
        <label>EAPP</label>
    </interactant>
    <organismsDiffer>false</organismsDiffer>
    <experiments>3</experiments>
</comment>
<comment type="interaction">
    <interactant intactId="EBI-1049336">
        <id>O95379</id>
    </interactant>
    <interactant intactId="EBI-769401">
        <id>Q8NBZ0</id>
        <label>INO80E</label>
    </interactant>
    <organismsDiffer>false</organismsDiffer>
    <experiments>3</experiments>
</comment>
<comment type="interaction">
    <interactant intactId="EBI-1049336">
        <id>O95379</id>
    </interactant>
    <interactant intactId="EBI-394607">
        <id>Q9NPJ6</id>
        <label>MED4</label>
    </interactant>
    <organismsDiffer>false</organismsDiffer>
    <experiments>7</experiments>
</comment>
<comment type="interaction">
    <interactant intactId="EBI-1049336">
        <id>O95379</id>
    </interactant>
    <interactant intactId="EBI-745767">
        <id>Q96S99</id>
        <label>PLEKHF1</label>
    </interactant>
    <organismsDiffer>false</organismsDiffer>
    <experiments>3</experiments>
</comment>
<comment type="interaction">
    <interactant intactId="EBI-1049336">
        <id>O95379</id>
    </interactant>
    <interactant intactId="EBI-742388">
        <id>Q9H8W4</id>
        <label>PLEKHF2</label>
    </interactant>
    <organismsDiffer>false</organismsDiffer>
    <experiments>4</experiments>
</comment>
<comment type="interaction">
    <interactant intactId="EBI-1049336">
        <id>O95379</id>
    </interactant>
    <interactant intactId="EBI-740924">
        <id>Q9NZ81</id>
        <label>PRR13</label>
    </interactant>
    <organismsDiffer>false</organismsDiffer>
    <experiments>6</experiments>
</comment>
<comment type="interaction">
    <interactant intactId="EBI-1049336">
        <id>O95379</id>
    </interactant>
    <interactant intactId="EBI-727004">
        <id>O00560</id>
        <label>SDCBP</label>
    </interactant>
    <organismsDiffer>false</organismsDiffer>
    <experiments>6</experiments>
</comment>
<comment type="interaction">
    <interactant intactId="EBI-1049336">
        <id>O95379</id>
    </interactant>
    <interactant intactId="EBI-740711">
        <id>Q96CG3</id>
        <label>TIFA</label>
    </interactant>
    <organismsDiffer>false</organismsDiffer>
    <experiments>3</experiments>
</comment>
<comment type="subcellular location">
    <subcellularLocation>
        <location evidence="5">Cytoplasm</location>
    </subcellularLocation>
</comment>
<comment type="alternative products">
    <event type="alternative splicing"/>
    <isoform>
        <id>O95379-1</id>
        <name>1</name>
        <sequence type="displayed"/>
    </isoform>
    <isoform>
        <id>O95379-2</id>
        <name>2</name>
        <sequence type="described" ref="VSP_024899"/>
    </isoform>
    <isoform>
        <id>O95379-3</id>
        <name>3</name>
        <sequence type="described" ref="VSP_024898"/>
    </isoform>
    <isoform>
        <id>O95379-4</id>
        <name>4</name>
        <sequence type="described" ref="VSP_054827"/>
    </isoform>
</comment>
<comment type="tissue specificity">
    <text evidence="2 3 5">Expressed at high levels in the spleen, lymph node, thymus, thyroid, bone marrow and placenta. Expressed at high levels both in various tumor tissues, unstimulated and cytokine-activated cultured cells. Expressed at low levels in the spinal cord, ovary, lung, adrenal glands, heart, brain, testis and skeletal muscle.</text>
</comment>
<comment type="developmental stage">
    <text evidence="3">Expressed at high levels in the fetal liver, lung and kidney.</text>
</comment>
<comment type="induction">
    <text evidence="3 4">By nuclear factor-KB (NF-KB) and TNF. Induction by TNF depends upon activation of NF-KB.</text>
</comment>
<comment type="similarity">
    <text evidence="11">Belongs to the TNFAIP8 family.</text>
</comment>
<accession>O95379</accession>
<accession>B3KMH1</accession>
<accession>B3KMI2</accession>
<accession>B7Z713</accession>
<accession>Q9P1Q1</accession>
<accession>Q9UER5</accession>
<accession>Q9UP47</accession>
<feature type="chain" id="PRO_0000285718" description="Tumor necrosis factor alpha-induced protein 8">
    <location>
        <begin position="1"/>
        <end position="198"/>
    </location>
</feature>
<feature type="coiled-coil region" evidence="1">
    <location>
        <begin position="49"/>
        <end position="83"/>
    </location>
</feature>
<feature type="splice variant" id="VSP_024898" description="In isoform 3." evidence="6 7 8">
    <original>MHSEAEESKEV</original>
    <variation>M</variation>
    <location>
        <begin position="1"/>
        <end position="11"/>
    </location>
</feature>
<feature type="splice variant" id="VSP_024899" description="In isoform 2." evidence="9 10">
    <original>MHSEAEESKE</original>
    <variation>MA</variation>
    <location>
        <begin position="1"/>
        <end position="10"/>
    </location>
</feature>
<feature type="splice variant" id="VSP_054827" description="In isoform 4." evidence="8">
    <original>MHSEAEESKE</original>
    <variation>MTLPRYCEVVLLIAHGEKMLKL</variation>
    <location>
        <begin position="1"/>
        <end position="10"/>
    </location>
</feature>
<feature type="sequence variant" id="VAR_032047" description="In dbSNP:rs3203922.">
    <original>S</original>
    <variation>C</variation>
    <location>
        <position position="151"/>
    </location>
</feature>
<protein>
    <recommendedName>
        <fullName>Tumor necrosis factor alpha-induced protein 8</fullName>
        <shortName>TNF alpha-induced protein 8</shortName>
    </recommendedName>
    <alternativeName>
        <fullName>Head and neck tumor and metastasis-related protein</fullName>
    </alternativeName>
    <alternativeName>
        <fullName>MDC-3.13</fullName>
    </alternativeName>
    <alternativeName>
        <fullName>NF-kappa-B-inducible DED-containing protein</fullName>
        <shortName>NDED</shortName>
    </alternativeName>
    <alternativeName>
        <fullName>SCC-S2</fullName>
    </alternativeName>
    <alternativeName>
        <fullName>TNF-induced protein GG2-1</fullName>
    </alternativeName>
</protein>
<name>TFIP8_HUMAN</name>
<gene>
    <name type="primary">TNFAIP8</name>
</gene>
<reference key="1">
    <citation type="journal article" date="1999" name="Blood">
        <title>Vascular endothelial genes that are responsive to tumor necrosis factor-alpha in vitro are expressed in atherosclerotic lesions, including inhibitor of apoptosis protein-1, stannin, and two novel genes.</title>
        <authorList>
            <person name="Horrevoets A.J.G."/>
            <person name="Fontijn R.D."/>
            <person name="van Zonneveld A.J."/>
            <person name="de Vries C.J.M."/>
            <person name="ten Cate J.W."/>
            <person name="Pannekoek H."/>
        </authorList>
    </citation>
    <scope>NUCLEOTIDE SEQUENCE [MRNA] (ISOFORM 3)</scope>
    <scope>TISSUE SPECIFICITY</scope>
    <source>
        <tissue>Umbilical vein</tissue>
    </source>
</reference>
<reference key="2">
    <citation type="submission" date="1998-10" db="EMBL/GenBank/DDBJ databases">
        <title>Identification of cellular factors involved in the differentiation of dendritic cells.</title>
        <authorList>
            <person name="Nietfeld W."/>
            <person name="Meyerhans A.F."/>
        </authorList>
    </citation>
    <scope>NUCLEOTIDE SEQUENCE [MRNA] (ISOFORMS 1 AND 2)</scope>
</reference>
<reference key="3">
    <citation type="submission" date="2004-06" db="EMBL/GenBank/DDBJ databases">
        <title>Cloning of human full open reading frames in Gateway(TM) system entry vector (pDONR201).</title>
        <authorList>
            <person name="Ebert L."/>
            <person name="Schick M."/>
            <person name="Neubert P."/>
            <person name="Schatten R."/>
            <person name="Henze S."/>
            <person name="Korn B."/>
        </authorList>
    </citation>
    <scope>NUCLEOTIDE SEQUENCE [LARGE SCALE MRNA] (ISOFORM 2)</scope>
</reference>
<reference key="4">
    <citation type="journal article" date="2004" name="Nat. Genet.">
        <title>Complete sequencing and characterization of 21,243 full-length human cDNAs.</title>
        <authorList>
            <person name="Ota T."/>
            <person name="Suzuki Y."/>
            <person name="Nishikawa T."/>
            <person name="Otsuki T."/>
            <person name="Sugiyama T."/>
            <person name="Irie R."/>
            <person name="Wakamatsu A."/>
            <person name="Hayashi K."/>
            <person name="Sato H."/>
            <person name="Nagai K."/>
            <person name="Kimura K."/>
            <person name="Makita H."/>
            <person name="Sekine M."/>
            <person name="Obayashi M."/>
            <person name="Nishi T."/>
            <person name="Shibahara T."/>
            <person name="Tanaka T."/>
            <person name="Ishii S."/>
            <person name="Yamamoto J."/>
            <person name="Saito K."/>
            <person name="Kawai Y."/>
            <person name="Isono Y."/>
            <person name="Nakamura Y."/>
            <person name="Nagahari K."/>
            <person name="Murakami K."/>
            <person name="Yasuda T."/>
            <person name="Iwayanagi T."/>
            <person name="Wagatsuma M."/>
            <person name="Shiratori A."/>
            <person name="Sudo H."/>
            <person name="Hosoiri T."/>
            <person name="Kaku Y."/>
            <person name="Kodaira H."/>
            <person name="Kondo H."/>
            <person name="Sugawara M."/>
            <person name="Takahashi M."/>
            <person name="Kanda K."/>
            <person name="Yokoi T."/>
            <person name="Furuya T."/>
            <person name="Kikkawa E."/>
            <person name="Omura Y."/>
            <person name="Abe K."/>
            <person name="Kamihara K."/>
            <person name="Katsuta N."/>
            <person name="Sato K."/>
            <person name="Tanikawa M."/>
            <person name="Yamazaki M."/>
            <person name="Ninomiya K."/>
            <person name="Ishibashi T."/>
            <person name="Yamashita H."/>
            <person name="Murakawa K."/>
            <person name="Fujimori K."/>
            <person name="Tanai H."/>
            <person name="Kimata M."/>
            <person name="Watanabe M."/>
            <person name="Hiraoka S."/>
            <person name="Chiba Y."/>
            <person name="Ishida S."/>
            <person name="Ono Y."/>
            <person name="Takiguchi S."/>
            <person name="Watanabe S."/>
            <person name="Yosida M."/>
            <person name="Hotuta T."/>
            <person name="Kusano J."/>
            <person name="Kanehori K."/>
            <person name="Takahashi-Fujii A."/>
            <person name="Hara H."/>
            <person name="Tanase T.-O."/>
            <person name="Nomura Y."/>
            <person name="Togiya S."/>
            <person name="Komai F."/>
            <person name="Hara R."/>
            <person name="Takeuchi K."/>
            <person name="Arita M."/>
            <person name="Imose N."/>
            <person name="Musashino K."/>
            <person name="Yuuki H."/>
            <person name="Oshima A."/>
            <person name="Sasaki N."/>
            <person name="Aotsuka S."/>
            <person name="Yoshikawa Y."/>
            <person name="Matsunawa H."/>
            <person name="Ichihara T."/>
            <person name="Shiohata N."/>
            <person name="Sano S."/>
            <person name="Moriya S."/>
            <person name="Momiyama H."/>
            <person name="Satoh N."/>
            <person name="Takami S."/>
            <person name="Terashima Y."/>
            <person name="Suzuki O."/>
            <person name="Nakagawa S."/>
            <person name="Senoh A."/>
            <person name="Mizoguchi H."/>
            <person name="Goto Y."/>
            <person name="Shimizu F."/>
            <person name="Wakebe H."/>
            <person name="Hishigaki H."/>
            <person name="Watanabe T."/>
            <person name="Sugiyama A."/>
            <person name="Takemoto M."/>
            <person name="Kawakami B."/>
            <person name="Yamazaki M."/>
            <person name="Watanabe K."/>
            <person name="Kumagai A."/>
            <person name="Itakura S."/>
            <person name="Fukuzumi Y."/>
            <person name="Fujimori Y."/>
            <person name="Komiyama M."/>
            <person name="Tashiro H."/>
            <person name="Tanigami A."/>
            <person name="Fujiwara T."/>
            <person name="Ono T."/>
            <person name="Yamada K."/>
            <person name="Fujii Y."/>
            <person name="Ozaki K."/>
            <person name="Hirao M."/>
            <person name="Ohmori Y."/>
            <person name="Kawabata A."/>
            <person name="Hikiji T."/>
            <person name="Kobatake N."/>
            <person name="Inagaki H."/>
            <person name="Ikema Y."/>
            <person name="Okamoto S."/>
            <person name="Okitani R."/>
            <person name="Kawakami T."/>
            <person name="Noguchi S."/>
            <person name="Itoh T."/>
            <person name="Shigeta K."/>
            <person name="Senba T."/>
            <person name="Matsumura K."/>
            <person name="Nakajima Y."/>
            <person name="Mizuno T."/>
            <person name="Morinaga M."/>
            <person name="Sasaki M."/>
            <person name="Togashi T."/>
            <person name="Oyama M."/>
            <person name="Hata H."/>
            <person name="Watanabe M."/>
            <person name="Komatsu T."/>
            <person name="Mizushima-Sugano J."/>
            <person name="Satoh T."/>
            <person name="Shirai Y."/>
            <person name="Takahashi Y."/>
            <person name="Nakagawa K."/>
            <person name="Okumura K."/>
            <person name="Nagase T."/>
            <person name="Nomura N."/>
            <person name="Kikuchi H."/>
            <person name="Masuho Y."/>
            <person name="Yamashita R."/>
            <person name="Nakai K."/>
            <person name="Yada T."/>
            <person name="Nakamura Y."/>
            <person name="Ohara O."/>
            <person name="Isogai T."/>
            <person name="Sugano S."/>
        </authorList>
    </citation>
    <scope>NUCLEOTIDE SEQUENCE [LARGE SCALE MRNA] (ISOFORMS 1; 3 AND 4)</scope>
    <source>
        <tissue>Placenta</tissue>
    </source>
</reference>
<reference key="5">
    <citation type="journal article" date="2004" name="Nature">
        <title>The DNA sequence and comparative analysis of human chromosome 5.</title>
        <authorList>
            <person name="Schmutz J."/>
            <person name="Martin J."/>
            <person name="Terry A."/>
            <person name="Couronne O."/>
            <person name="Grimwood J."/>
            <person name="Lowry S."/>
            <person name="Gordon L.A."/>
            <person name="Scott D."/>
            <person name="Xie G."/>
            <person name="Huang W."/>
            <person name="Hellsten U."/>
            <person name="Tran-Gyamfi M."/>
            <person name="She X."/>
            <person name="Prabhakar S."/>
            <person name="Aerts A."/>
            <person name="Altherr M."/>
            <person name="Bajorek E."/>
            <person name="Black S."/>
            <person name="Branscomb E."/>
            <person name="Caoile C."/>
            <person name="Challacombe J.F."/>
            <person name="Chan Y.M."/>
            <person name="Denys M."/>
            <person name="Detter J.C."/>
            <person name="Escobar J."/>
            <person name="Flowers D."/>
            <person name="Fotopulos D."/>
            <person name="Glavina T."/>
            <person name="Gomez M."/>
            <person name="Gonzales E."/>
            <person name="Goodstein D."/>
            <person name="Grigoriev I."/>
            <person name="Groza M."/>
            <person name="Hammon N."/>
            <person name="Hawkins T."/>
            <person name="Haydu L."/>
            <person name="Israni S."/>
            <person name="Jett J."/>
            <person name="Kadner K."/>
            <person name="Kimball H."/>
            <person name="Kobayashi A."/>
            <person name="Lopez F."/>
            <person name="Lou Y."/>
            <person name="Martinez D."/>
            <person name="Medina C."/>
            <person name="Morgan J."/>
            <person name="Nandkeshwar R."/>
            <person name="Noonan J.P."/>
            <person name="Pitluck S."/>
            <person name="Pollard M."/>
            <person name="Predki P."/>
            <person name="Priest J."/>
            <person name="Ramirez L."/>
            <person name="Retterer J."/>
            <person name="Rodriguez A."/>
            <person name="Rogers S."/>
            <person name="Salamov A."/>
            <person name="Salazar A."/>
            <person name="Thayer N."/>
            <person name="Tice H."/>
            <person name="Tsai M."/>
            <person name="Ustaszewska A."/>
            <person name="Vo N."/>
            <person name="Wheeler J."/>
            <person name="Wu K."/>
            <person name="Yang J."/>
            <person name="Dickson M."/>
            <person name="Cheng J.-F."/>
            <person name="Eichler E.E."/>
            <person name="Olsen A."/>
            <person name="Pennacchio L.A."/>
            <person name="Rokhsar D.S."/>
            <person name="Richardson P."/>
            <person name="Lucas S.M."/>
            <person name="Myers R.M."/>
            <person name="Rubin E.M."/>
        </authorList>
    </citation>
    <scope>NUCLEOTIDE SEQUENCE [LARGE SCALE GENOMIC DNA]</scope>
    <source>
        <tissue>Stomach</tissue>
    </source>
</reference>
<reference key="6">
    <citation type="submission" date="2005-09" db="EMBL/GenBank/DDBJ databases">
        <authorList>
            <person name="Mural R.J."/>
            <person name="Istrail S."/>
            <person name="Sutton G.G."/>
            <person name="Florea L."/>
            <person name="Halpern A.L."/>
            <person name="Mobarry C.M."/>
            <person name="Lippert R."/>
            <person name="Walenz B."/>
            <person name="Shatkay H."/>
            <person name="Dew I."/>
            <person name="Miller J.R."/>
            <person name="Flanigan M.J."/>
            <person name="Edwards N.J."/>
            <person name="Bolanos R."/>
            <person name="Fasulo D."/>
            <person name="Halldorsson B.V."/>
            <person name="Hannenhalli S."/>
            <person name="Turner R."/>
            <person name="Yooseph S."/>
            <person name="Lu F."/>
            <person name="Nusskern D.R."/>
            <person name="Shue B.C."/>
            <person name="Zheng X.H."/>
            <person name="Zhong F."/>
            <person name="Delcher A.L."/>
            <person name="Huson D.H."/>
            <person name="Kravitz S.A."/>
            <person name="Mouchard L."/>
            <person name="Reinert K."/>
            <person name="Remington K.A."/>
            <person name="Clark A.G."/>
            <person name="Waterman M.S."/>
            <person name="Eichler E.E."/>
            <person name="Adams M.D."/>
            <person name="Hunkapiller M.W."/>
            <person name="Myers E.W."/>
            <person name="Venter J.C."/>
        </authorList>
    </citation>
    <scope>NUCLEOTIDE SEQUENCE [LARGE SCALE GENOMIC DNA]</scope>
</reference>
<reference key="7">
    <citation type="journal article" date="2004" name="Genome Res.">
        <title>The status, quality, and expansion of the NIH full-length cDNA project: the Mammalian Gene Collection (MGC).</title>
        <authorList>
            <consortium name="The MGC Project Team"/>
        </authorList>
    </citation>
    <scope>NUCLEOTIDE SEQUENCE [LARGE SCALE MRNA] (ISOFORM 1)</scope>
    <source>
        <tissue>Brain</tissue>
        <tissue>Urinary bladder</tissue>
    </source>
</reference>
<reference key="8">
    <citation type="journal article" date="2000" name="J. Biol. Chem.">
        <title>Identification of a novel tumor necrosis factor-alpha-inducible gene, SCC-S2, containing the consensus sequence of a death effector domain of fas-associated death domain-like interleukin-1beta-converting enzyme-inhibitory protein.</title>
        <authorList>
            <person name="Kumar D."/>
            <person name="Whiteside T.L."/>
            <person name="Kasid U."/>
        </authorList>
    </citation>
    <scope>NUCLEOTIDE SEQUENCE [MRNA] OF 99-198 (ISOFORM 3)</scope>
    <scope>IDENTIFICATION</scope>
    <scope>FUNCTION</scope>
    <scope>INDUCTION</scope>
    <scope>TISSUE SPECIFICITY</scope>
    <scope>DEVELOPMENTAL STAGE</scope>
    <source>
        <tissue>Heart</tissue>
    </source>
</reference>
<reference key="9">
    <citation type="journal article" date="2001" name="J. Biol. Chem.">
        <title>Nuclear factor-kappa B-inducible death effector domain-containing protein suppresses tumor necrosis factor-mediated apoptosis by inhibiting caspase-8 activity.</title>
        <authorList>
            <person name="You Z."/>
            <person name="Ouyang H."/>
            <person name="Lopatin D."/>
            <person name="Polver P.J."/>
            <person name="Wang C.-Y."/>
        </authorList>
    </citation>
    <scope>FUNCTION</scope>
    <scope>INDUCTION</scope>
</reference>
<reference key="10">
    <citation type="journal article" date="2004" name="Oncogene">
        <title>Expression of SCC-S2, an antiapoptotic molecule, correlates with enhanced proliferation and tumorigenicity of MDA-MB 435 cells.</title>
        <authorList>
            <person name="Kumar D."/>
            <person name="Gokhale P."/>
            <person name="Broustas C."/>
            <person name="Chakravarty D."/>
            <person name="Ahmad I."/>
            <person name="Kasid U."/>
        </authorList>
    </citation>
    <scope>FUNCTION</scope>
    <scope>SUBCELLULAR LOCATION</scope>
    <scope>TISSUE SPECIFICITY</scope>
</reference>
<reference key="11">
    <citation type="journal article" date="2011" name="BMC Syst. Biol.">
        <title>Initial characterization of the human central proteome.</title>
        <authorList>
            <person name="Burkard T.R."/>
            <person name="Planyavsky M."/>
            <person name="Kaupe I."/>
            <person name="Breitwieser F.P."/>
            <person name="Buerckstuemmer T."/>
            <person name="Bennett K.L."/>
            <person name="Superti-Furga G."/>
            <person name="Colinge J."/>
        </authorList>
    </citation>
    <scope>IDENTIFICATION BY MASS SPECTROMETRY [LARGE SCALE ANALYSIS]</scope>
</reference>
<reference key="12">
    <citation type="journal article" date="2015" name="Proteomics">
        <title>N-terminome analysis of the human mitochondrial proteome.</title>
        <authorList>
            <person name="Vaca Jacome A.S."/>
            <person name="Rabilloud T."/>
            <person name="Schaeffer-Reiss C."/>
            <person name="Rompais M."/>
            <person name="Ayoub D."/>
            <person name="Lane L."/>
            <person name="Bairoch A."/>
            <person name="Van Dorsselaer A."/>
            <person name="Carapito C."/>
        </authorList>
    </citation>
    <scope>IDENTIFICATION BY MASS SPECTROMETRY [LARGE SCALE ANALYSIS]</scope>
</reference>
<keyword id="KW-0025">Alternative splicing</keyword>
<keyword id="KW-0053">Apoptosis</keyword>
<keyword id="KW-0175">Coiled coil</keyword>
<keyword id="KW-0963">Cytoplasm</keyword>
<keyword id="KW-1267">Proteomics identification</keyword>
<keyword id="KW-1185">Reference proteome</keyword>
<organism>
    <name type="scientific">Homo sapiens</name>
    <name type="common">Human</name>
    <dbReference type="NCBI Taxonomy" id="9606"/>
    <lineage>
        <taxon>Eukaryota</taxon>
        <taxon>Metazoa</taxon>
        <taxon>Chordata</taxon>
        <taxon>Craniata</taxon>
        <taxon>Vertebrata</taxon>
        <taxon>Euteleostomi</taxon>
        <taxon>Mammalia</taxon>
        <taxon>Eutheria</taxon>
        <taxon>Euarchontoglires</taxon>
        <taxon>Primates</taxon>
        <taxon>Haplorrhini</taxon>
        <taxon>Catarrhini</taxon>
        <taxon>Hominidae</taxon>
        <taxon>Homo</taxon>
    </lineage>
</organism>
<proteinExistence type="evidence at protein level"/>
<evidence type="ECO:0000255" key="1"/>
<evidence type="ECO:0000269" key="2">
    <source>
    </source>
</evidence>
<evidence type="ECO:0000269" key="3">
    <source>
    </source>
</evidence>
<evidence type="ECO:0000269" key="4">
    <source>
    </source>
</evidence>
<evidence type="ECO:0000269" key="5">
    <source>
    </source>
</evidence>
<evidence type="ECO:0000303" key="6">
    <source>
    </source>
</evidence>
<evidence type="ECO:0000303" key="7">
    <source>
    </source>
</evidence>
<evidence type="ECO:0000303" key="8">
    <source>
    </source>
</evidence>
<evidence type="ECO:0000303" key="9">
    <source ref="2"/>
</evidence>
<evidence type="ECO:0000303" key="10">
    <source ref="3"/>
</evidence>
<evidence type="ECO:0000305" key="11"/>
<dbReference type="EMBL" id="AF070671">
    <property type="protein sequence ID" value="AAC83229.1"/>
    <property type="molecule type" value="mRNA"/>
</dbReference>
<dbReference type="EMBL" id="AF099935">
    <property type="protein sequence ID" value="AAC72975.1"/>
    <property type="molecule type" value="mRNA"/>
</dbReference>
<dbReference type="EMBL" id="AF099936">
    <property type="protein sequence ID" value="AAC72976.1"/>
    <property type="molecule type" value="mRNA"/>
</dbReference>
<dbReference type="EMBL" id="CR457137">
    <property type="protein sequence ID" value="CAG33418.1"/>
    <property type="molecule type" value="mRNA"/>
</dbReference>
<dbReference type="EMBL" id="AK001850">
    <property type="protein sequence ID" value="BAG50983.1"/>
    <property type="molecule type" value="mRNA"/>
</dbReference>
<dbReference type="EMBL" id="AK001931">
    <property type="protein sequence ID" value="BAG50994.1"/>
    <property type="molecule type" value="mRNA"/>
</dbReference>
<dbReference type="EMBL" id="AK301281">
    <property type="protein sequence ID" value="BAH13449.1"/>
    <property type="molecule type" value="mRNA"/>
</dbReference>
<dbReference type="EMBL" id="AC008475">
    <property type="status" value="NOT_ANNOTATED_CDS"/>
    <property type="molecule type" value="Genomic_DNA"/>
</dbReference>
<dbReference type="EMBL" id="AC027320">
    <property type="status" value="NOT_ANNOTATED_CDS"/>
    <property type="molecule type" value="Genomic_DNA"/>
</dbReference>
<dbReference type="EMBL" id="AC035144">
    <property type="status" value="NOT_ANNOTATED_CDS"/>
    <property type="molecule type" value="Genomic_DNA"/>
</dbReference>
<dbReference type="EMBL" id="CH471086">
    <property type="protein sequence ID" value="EAW48914.1"/>
    <property type="molecule type" value="Genomic_DNA"/>
</dbReference>
<dbReference type="EMBL" id="BC005352">
    <property type="protein sequence ID" value="AAH05352.1"/>
    <property type="molecule type" value="mRNA"/>
</dbReference>
<dbReference type="EMBL" id="BC007014">
    <property type="protein sequence ID" value="AAH07014.1"/>
    <property type="molecule type" value="mRNA"/>
</dbReference>
<dbReference type="EMBL" id="AF098933">
    <property type="protein sequence ID" value="AAF29435.1"/>
    <property type="molecule type" value="mRNA"/>
</dbReference>
<dbReference type="CCDS" id="CCDS47257.1">
    <molecule id="O95379-3"/>
</dbReference>
<dbReference type="CCDS" id="CCDS47258.1">
    <molecule id="O95379-1"/>
</dbReference>
<dbReference type="CCDS" id="CCDS68933.1">
    <molecule id="O95379-4"/>
</dbReference>
<dbReference type="RefSeq" id="NP_001071122.1">
    <molecule id="O95379-3"/>
    <property type="nucleotide sequence ID" value="NM_001077654.3"/>
</dbReference>
<dbReference type="RefSeq" id="NP_001273742.1">
    <molecule id="O95379-1"/>
    <property type="nucleotide sequence ID" value="NM_001286813.2"/>
</dbReference>
<dbReference type="RefSeq" id="NP_001273743.1">
    <molecule id="O95379-4"/>
    <property type="nucleotide sequence ID" value="NM_001286814.1"/>
</dbReference>
<dbReference type="RefSeq" id="NP_001273744.1">
    <property type="nucleotide sequence ID" value="NM_001286815.1"/>
</dbReference>
<dbReference type="RefSeq" id="NP_001273746.1">
    <property type="nucleotide sequence ID" value="NM_001286817.1"/>
</dbReference>
<dbReference type="RefSeq" id="NP_055165.2">
    <molecule id="O95379-1"/>
    <property type="nucleotide sequence ID" value="NM_014350.4"/>
</dbReference>
<dbReference type="SMR" id="O95379"/>
<dbReference type="BioGRID" id="117344">
    <property type="interactions" value="33"/>
</dbReference>
<dbReference type="FunCoup" id="O95379">
    <property type="interactions" value="1987"/>
</dbReference>
<dbReference type="IntAct" id="O95379">
    <property type="interactions" value="16"/>
</dbReference>
<dbReference type="MINT" id="O95379"/>
<dbReference type="STRING" id="9606.ENSP00000427424"/>
<dbReference type="iPTMnet" id="O95379"/>
<dbReference type="PhosphoSitePlus" id="O95379"/>
<dbReference type="BioMuta" id="TNFAIP8"/>
<dbReference type="jPOST" id="O95379"/>
<dbReference type="MassIVE" id="O95379"/>
<dbReference type="PaxDb" id="9606-ENSP00000427424"/>
<dbReference type="PeptideAtlas" id="O95379"/>
<dbReference type="ProteomicsDB" id="50831">
    <molecule id="O95379-1"/>
</dbReference>
<dbReference type="ProteomicsDB" id="50832">
    <molecule id="O95379-2"/>
</dbReference>
<dbReference type="ProteomicsDB" id="50833">
    <molecule id="O95379-3"/>
</dbReference>
<dbReference type="ProteomicsDB" id="6823"/>
<dbReference type="Pumba" id="O95379"/>
<dbReference type="Antibodypedia" id="25539">
    <property type="antibodies" value="257 antibodies from 32 providers"/>
</dbReference>
<dbReference type="DNASU" id="25816"/>
<dbReference type="Ensembl" id="ENST00000274456.6">
    <molecule id="O95379-3"/>
    <property type="protein sequence ID" value="ENSP00000274456.6"/>
    <property type="gene ID" value="ENSG00000145779.8"/>
</dbReference>
<dbReference type="Ensembl" id="ENST00000503646.1">
    <molecule id="O95379-1"/>
    <property type="protein sequence ID" value="ENSP00000421848.1"/>
    <property type="gene ID" value="ENSG00000145779.8"/>
</dbReference>
<dbReference type="Ensembl" id="ENST00000504771.3">
    <molecule id="O95379-1"/>
    <property type="protein sequence ID" value="ENSP00000422245.1"/>
    <property type="gene ID" value="ENSG00000145779.8"/>
</dbReference>
<dbReference type="Ensembl" id="ENST00000513374.1">
    <molecule id="O95379-4"/>
    <property type="protein sequence ID" value="ENSP00000427424.1"/>
    <property type="gene ID" value="ENSG00000145779.8"/>
</dbReference>
<dbReference type="GeneID" id="25816"/>
<dbReference type="KEGG" id="hsa:25816"/>
<dbReference type="MANE-Select" id="ENST00000504771.3">
    <property type="protein sequence ID" value="ENSP00000422245.1"/>
    <property type="RefSeq nucleotide sequence ID" value="NM_014350.4"/>
    <property type="RefSeq protein sequence ID" value="NP_055165.2"/>
</dbReference>
<dbReference type="UCSC" id="uc003ksg.5">
    <molecule id="O95379-1"/>
    <property type="organism name" value="human"/>
</dbReference>
<dbReference type="AGR" id="HGNC:17260"/>
<dbReference type="CTD" id="25816"/>
<dbReference type="DisGeNET" id="25816"/>
<dbReference type="GeneCards" id="TNFAIP8"/>
<dbReference type="HGNC" id="HGNC:17260">
    <property type="gene designation" value="TNFAIP8"/>
</dbReference>
<dbReference type="HPA" id="ENSG00000145779">
    <property type="expression patterns" value="Tissue enhanced (lymphoid)"/>
</dbReference>
<dbReference type="MIM" id="612111">
    <property type="type" value="gene"/>
</dbReference>
<dbReference type="neXtProt" id="NX_O95379"/>
<dbReference type="OpenTargets" id="ENSG00000145779"/>
<dbReference type="PharmGKB" id="PA134957136"/>
<dbReference type="VEuPathDB" id="HostDB:ENSG00000145779"/>
<dbReference type="eggNOG" id="ENOG502S00N">
    <property type="taxonomic scope" value="Eukaryota"/>
</dbReference>
<dbReference type="GeneTree" id="ENSGT00390000003488"/>
<dbReference type="HOGENOM" id="CLU_085918_1_0_1"/>
<dbReference type="InParanoid" id="O95379"/>
<dbReference type="OMA" id="QDRCDQV"/>
<dbReference type="OrthoDB" id="10055976at2759"/>
<dbReference type="PAN-GO" id="O95379">
    <property type="GO annotations" value="2 GO annotations based on evolutionary models"/>
</dbReference>
<dbReference type="PhylomeDB" id="O95379"/>
<dbReference type="TreeFam" id="TF323415"/>
<dbReference type="PathwayCommons" id="O95379"/>
<dbReference type="Reactome" id="R-HSA-1483255">
    <property type="pathway name" value="PI Metabolism"/>
</dbReference>
<dbReference type="SignaLink" id="O95379"/>
<dbReference type="SIGNOR" id="O95379"/>
<dbReference type="BioGRID-ORCS" id="25816">
    <property type="hits" value="10 hits in 1153 CRISPR screens"/>
</dbReference>
<dbReference type="ChiTaRS" id="TNFAIP8">
    <property type="organism name" value="human"/>
</dbReference>
<dbReference type="GeneWiki" id="TNFAIP8"/>
<dbReference type="GenomeRNAi" id="25816"/>
<dbReference type="Pharos" id="O95379">
    <property type="development level" value="Tbio"/>
</dbReference>
<dbReference type="PRO" id="PR:O95379"/>
<dbReference type="Proteomes" id="UP000005640">
    <property type="component" value="Chromosome 5"/>
</dbReference>
<dbReference type="RNAct" id="O95379">
    <property type="molecule type" value="protein"/>
</dbReference>
<dbReference type="Bgee" id="ENSG00000145779">
    <property type="expression patterns" value="Expressed in cartilage tissue and 174 other cell types or tissues"/>
</dbReference>
<dbReference type="ExpressionAtlas" id="O95379">
    <property type="expression patterns" value="baseline and differential"/>
</dbReference>
<dbReference type="GO" id="GO:0005737">
    <property type="term" value="C:cytoplasm"/>
    <property type="evidence" value="ECO:0000314"/>
    <property type="project" value="UniProtKB"/>
</dbReference>
<dbReference type="GO" id="GO:0005654">
    <property type="term" value="C:nucleoplasm"/>
    <property type="evidence" value="ECO:0000314"/>
    <property type="project" value="HPA"/>
</dbReference>
<dbReference type="GO" id="GO:0043027">
    <property type="term" value="F:cysteine-type endopeptidase inhibitor activity involved in apoptotic process"/>
    <property type="evidence" value="ECO:0000315"/>
    <property type="project" value="UniProtKB"/>
</dbReference>
<dbReference type="GO" id="GO:0006915">
    <property type="term" value="P:apoptotic process"/>
    <property type="evidence" value="ECO:0007669"/>
    <property type="project" value="UniProtKB-KW"/>
</dbReference>
<dbReference type="GO" id="GO:0043066">
    <property type="term" value="P:negative regulation of apoptotic process"/>
    <property type="evidence" value="ECO:0000304"/>
    <property type="project" value="ProtInc"/>
</dbReference>
<dbReference type="GO" id="GO:0043065">
    <property type="term" value="P:positive regulation of apoptotic process"/>
    <property type="evidence" value="ECO:0000315"/>
    <property type="project" value="UniProtKB"/>
</dbReference>
<dbReference type="FunFam" id="1.20.1440.160:FF:000001">
    <property type="entry name" value="Tumor necrosis factor alpha-induced protein 8-like 1"/>
    <property type="match status" value="1"/>
</dbReference>
<dbReference type="Gene3D" id="1.20.1440.160">
    <property type="entry name" value="Tumor necrosis factor alpha-induced protein 8-like"/>
    <property type="match status" value="1"/>
</dbReference>
<dbReference type="InterPro" id="IPR008477">
    <property type="entry name" value="TNFAIP8-like"/>
</dbReference>
<dbReference type="InterPro" id="IPR038355">
    <property type="entry name" value="TNFAIP8_sf"/>
</dbReference>
<dbReference type="PANTHER" id="PTHR12757:SF3">
    <property type="entry name" value="TUMOR NECROSIS FACTOR ALPHA-INDUCED PROTEIN 8"/>
    <property type="match status" value="1"/>
</dbReference>
<dbReference type="PANTHER" id="PTHR12757">
    <property type="entry name" value="TUMOR NECROSIS FACTOR INDUCED PROTEIN"/>
    <property type="match status" value="1"/>
</dbReference>
<dbReference type="Pfam" id="PF05527">
    <property type="entry name" value="DUF758"/>
    <property type="match status" value="1"/>
</dbReference>